<sequence length="237" mass="26237">MNTLIQGPDHPSNAMSSRANNRSNNSRCPTCIDELDAMARNCPAHNTVNTVSRRQRRNAARAAAYRNANARVPLPLPVVSVSRPQAKASLRLPNNQVWVTRKASEWSAKTVDTNDAIPFKTIVEGIPEIGAETKFFRLLIGFVAVSDGTFGMVDGVTGDVIPDPPVVGRLGFKKNTYRSRDFDLGGKLLNQLDDRAVVWCLDERRREAKRVQLAGYWIAISKPAPLMPPEDFLVNQD</sequence>
<organismHost>
    <name type="scientific">Asparagus officinalis</name>
    <name type="common">Garden asparagus</name>
    <dbReference type="NCBI Taxonomy" id="4686"/>
</organismHost>
<organismHost>
    <name type="scientific">Dahlia</name>
    <dbReference type="NCBI Taxonomy" id="41562"/>
</organismHost>
<organismHost>
    <name type="scientific">Glycine max</name>
    <name type="common">Soybean</name>
    <name type="synonym">Glycine hispida</name>
    <dbReference type="NCBI Taxonomy" id="3847"/>
</organismHost>
<organismHost>
    <name type="scientific">Gossypium herbaceum</name>
    <name type="common">Levant cotton</name>
    <name type="synonym">Arabian cotton</name>
    <dbReference type="NCBI Taxonomy" id="34274"/>
</organismHost>
<organismHost>
    <name type="scientific">Melilotus albus</name>
    <name type="common">White sweet clover</name>
    <name type="synonym">Melilotus officinalis subsp. albus</name>
    <dbReference type="NCBI Taxonomy" id="47082"/>
</organismHost>
<organismHost>
    <name type="scientific">Nicotiana tabacum</name>
    <name type="common">Common tobacco</name>
    <dbReference type="NCBI Taxonomy" id="4097"/>
</organismHost>
<organismHost>
    <name type="scientific">Phaseolus vulgaris</name>
    <name type="common">Kidney bean</name>
    <name type="synonym">French bean</name>
    <dbReference type="NCBI Taxonomy" id="3885"/>
</organismHost>
<organismHost>
    <name type="scientific">Rosa setigera</name>
    <dbReference type="NCBI Taxonomy" id="137000"/>
</organismHost>
<organismHost>
    <name type="scientific">Trifolium pratense</name>
    <name type="common">Red clover</name>
    <dbReference type="NCBI Taxonomy" id="57577"/>
</organismHost>
<proteinExistence type="inferred from homology"/>
<accession>P03598</accession>
<evidence type="ECO:0000250" key="1"/>
<evidence type="ECO:0000256" key="2">
    <source>
        <dbReference type="SAM" id="MobiDB-lite"/>
    </source>
</evidence>
<evidence type="ECO:0000305" key="3"/>
<protein>
    <recommendedName>
        <fullName>Capsid protein</fullName>
        <shortName>CP</shortName>
    </recommendedName>
    <alternativeName>
        <fullName>Coat protein</fullName>
    </alternativeName>
</protein>
<feature type="chain" id="PRO_0000083225" description="Capsid protein">
    <location>
        <begin position="1"/>
        <end position="237"/>
    </location>
</feature>
<feature type="region of interest" description="Disordered" evidence="2">
    <location>
        <begin position="1"/>
        <end position="26"/>
    </location>
</feature>
<feature type="compositionally biased region" description="Low complexity" evidence="2">
    <location>
        <begin position="12"/>
        <end position="26"/>
    </location>
</feature>
<reference key="1">
    <citation type="journal article" date="1984" name="Nucleic Acids Res.">
        <title>Complete nucleotide sequence of tobacco streak virus RNA 3.</title>
        <authorList>
            <person name="Cornelissen B.J.C."/>
            <person name="Janssen H."/>
            <person name="Zuidema D."/>
            <person name="Bol J.F."/>
        </authorList>
    </citation>
    <scope>NUCLEOTIDE SEQUENCE [GENOMIC RNA]</scope>
</reference>
<organism>
    <name type="scientific">Tobacco streak virus (strain WC)</name>
    <name type="common">TSV</name>
    <dbReference type="NCBI Taxonomy" id="12318"/>
    <lineage>
        <taxon>Viruses</taxon>
        <taxon>Riboviria</taxon>
        <taxon>Orthornavirae</taxon>
        <taxon>Kitrinoviricota</taxon>
        <taxon>Alsuviricetes</taxon>
        <taxon>Martellivirales</taxon>
        <taxon>Bromoviridae</taxon>
        <taxon>Ilarvirus</taxon>
        <taxon>Tobacco streak virus</taxon>
    </lineage>
</organism>
<name>CAPSD_TOBSV</name>
<dbReference type="EMBL" id="X00435">
    <property type="protein sequence ID" value="CAA25133.1"/>
    <property type="molecule type" value="Genomic_RNA"/>
</dbReference>
<dbReference type="PIR" id="A04206">
    <property type="entry name" value="VCBVWC"/>
</dbReference>
<dbReference type="RefSeq" id="NP_620774.1">
    <property type="nucleotide sequence ID" value="NC_003845.1"/>
</dbReference>
<dbReference type="SMR" id="P03598"/>
<dbReference type="KEGG" id="vg:962660"/>
<dbReference type="Proteomes" id="UP000007795">
    <property type="component" value="Genome"/>
</dbReference>
<dbReference type="GO" id="GO:1990904">
    <property type="term" value="C:ribonucleoprotein complex"/>
    <property type="evidence" value="ECO:0007669"/>
    <property type="project" value="UniProtKB-KW"/>
</dbReference>
<dbReference type="GO" id="GO:0039617">
    <property type="term" value="C:T=3 icosahedral viral capsid"/>
    <property type="evidence" value="ECO:0007669"/>
    <property type="project" value="UniProtKB-KW"/>
</dbReference>
<dbReference type="GO" id="GO:0019013">
    <property type="term" value="C:viral nucleocapsid"/>
    <property type="evidence" value="ECO:0007669"/>
    <property type="project" value="UniProtKB-KW"/>
</dbReference>
<dbReference type="GO" id="GO:0003723">
    <property type="term" value="F:RNA binding"/>
    <property type="evidence" value="ECO:0007669"/>
    <property type="project" value="UniProtKB-KW"/>
</dbReference>
<dbReference type="InterPro" id="IPR002681">
    <property type="entry name" value="Coat_Ilarvirus"/>
</dbReference>
<dbReference type="InterPro" id="IPR016405">
    <property type="entry name" value="Coat_Ilarvirus_prd"/>
</dbReference>
<dbReference type="Pfam" id="PF01787">
    <property type="entry name" value="Ilar_coat"/>
    <property type="match status" value="1"/>
</dbReference>
<dbReference type="PIRSF" id="PIRSF004078">
    <property type="entry name" value="Coat_Ilarvirus_prd"/>
    <property type="match status" value="1"/>
</dbReference>
<gene>
    <name type="ORF">ORF3b</name>
</gene>
<comment type="function">
    <text evidence="1">Capsid protein self-assembles to form an icosahedral capsid with a T=3 symmetry, about 29 nm in diameter, and consisting of 12 capsid protein pentamers and 20 capsid protein hexamers. Binds to the to the 3' end of the nonpolyadenylated viral RNA and is involved in viral RNA translation initiation. Probably binds RNA and plays a role in packaging (By similarity).</text>
</comment>
<comment type="subcellular location">
    <subcellularLocation>
        <location evidence="3">Virion</location>
    </subcellularLocation>
</comment>
<comment type="similarity">
    <text evidence="3">Belongs to the alphamovirus/ilarvirus capsid protein family.</text>
</comment>
<keyword id="KW-0167">Capsid protein</keyword>
<keyword id="KW-1185">Reference proteome</keyword>
<keyword id="KW-0687">Ribonucleoprotein</keyword>
<keyword id="KW-0694">RNA-binding</keyword>
<keyword id="KW-1142">T=3 icosahedral capsid protein</keyword>
<keyword id="KW-0543">Viral nucleoprotein</keyword>
<keyword id="KW-0946">Virion</keyword>